<protein>
    <recommendedName>
        <fullName evidence="3">Epithelial sodium channel subunit beta</fullName>
    </recommendedName>
    <alternativeName>
        <fullName>Amiloride-sensitive sodium channel subunit beta</fullName>
    </alternativeName>
    <alternativeName>
        <fullName>Beta-NaCH</fullName>
    </alternativeName>
    <alternativeName>
        <fullName>Epithelial Na(+) channel subunit beta</fullName>
        <shortName>Beta-ENaC</shortName>
    </alternativeName>
    <alternativeName>
        <fullName>Nonvoltage-gated sodium channel 1 subunit beta</fullName>
    </alternativeName>
    <alternativeName>
        <fullName>SCNEB</fullName>
    </alternativeName>
</protein>
<dbReference type="EMBL" id="AJ132109">
    <property type="protein sequence ID" value="CAA10572.1"/>
    <property type="molecule type" value="mRNA"/>
</dbReference>
<dbReference type="EMBL" id="AF229026">
    <property type="protein sequence ID" value="AAF43681.1"/>
    <property type="molecule type" value="mRNA"/>
</dbReference>
<dbReference type="RefSeq" id="NP_001076244.1">
    <property type="nucleotide sequence ID" value="NM_001082775.1"/>
</dbReference>
<dbReference type="BMRB" id="O97742"/>
<dbReference type="SMR" id="O97742"/>
<dbReference type="FunCoup" id="O97742">
    <property type="interactions" value="9"/>
</dbReference>
<dbReference type="STRING" id="9986.ENSOCUP00000007259"/>
<dbReference type="GlyCosmos" id="O97742">
    <property type="glycosylation" value="3 sites, No reported glycans"/>
</dbReference>
<dbReference type="PaxDb" id="9986-ENSOCUP00000007259"/>
<dbReference type="GeneID" id="100009564"/>
<dbReference type="KEGG" id="ocu:100009564"/>
<dbReference type="CTD" id="6338"/>
<dbReference type="eggNOG" id="KOG4294">
    <property type="taxonomic scope" value="Eukaryota"/>
</dbReference>
<dbReference type="InParanoid" id="O97742"/>
<dbReference type="OrthoDB" id="6502088at2759"/>
<dbReference type="Proteomes" id="UP000001811">
    <property type="component" value="Unplaced"/>
</dbReference>
<dbReference type="GO" id="GO:0016324">
    <property type="term" value="C:apical plasma membrane"/>
    <property type="evidence" value="ECO:0000250"/>
    <property type="project" value="UniProtKB"/>
</dbReference>
<dbReference type="GO" id="GO:0030659">
    <property type="term" value="C:cytoplasmic vesicle membrane"/>
    <property type="evidence" value="ECO:0007669"/>
    <property type="project" value="UniProtKB-SubCell"/>
</dbReference>
<dbReference type="GO" id="GO:0005886">
    <property type="term" value="C:plasma membrane"/>
    <property type="evidence" value="ECO:0000250"/>
    <property type="project" value="UniProtKB"/>
</dbReference>
<dbReference type="GO" id="GO:0034706">
    <property type="term" value="C:sodium channel complex"/>
    <property type="evidence" value="ECO:0000250"/>
    <property type="project" value="UniProtKB"/>
</dbReference>
<dbReference type="GO" id="GO:0015280">
    <property type="term" value="F:ligand-gated sodium channel activity"/>
    <property type="evidence" value="ECO:0007669"/>
    <property type="project" value="InterPro"/>
</dbReference>
<dbReference type="GO" id="GO:0050891">
    <property type="term" value="P:multicellular organismal-level water homeostasis"/>
    <property type="evidence" value="ECO:0000250"/>
    <property type="project" value="UniProtKB"/>
</dbReference>
<dbReference type="GO" id="GO:0055078">
    <property type="term" value="P:sodium ion homeostasis"/>
    <property type="evidence" value="ECO:0000250"/>
    <property type="project" value="UniProtKB"/>
</dbReference>
<dbReference type="GO" id="GO:0035725">
    <property type="term" value="P:sodium ion transmembrane transport"/>
    <property type="evidence" value="ECO:0000250"/>
    <property type="project" value="UniProtKB"/>
</dbReference>
<dbReference type="FunFam" id="2.60.470.10:FF:000003">
    <property type="entry name" value="Amiloride-sensitive sodium channel subunit beta"/>
    <property type="match status" value="1"/>
</dbReference>
<dbReference type="FunFam" id="1.10.287.770:FF:000002">
    <property type="entry name" value="Amiloride-sensitive sodium channel subunit beta 1"/>
    <property type="match status" value="1"/>
</dbReference>
<dbReference type="Gene3D" id="2.60.470.10">
    <property type="entry name" value="Acid-sensing ion channels like domains"/>
    <property type="match status" value="1"/>
</dbReference>
<dbReference type="Gene3D" id="1.10.287.770">
    <property type="entry name" value="YojJ-like"/>
    <property type="match status" value="1"/>
</dbReference>
<dbReference type="InterPro" id="IPR001873">
    <property type="entry name" value="ENaC"/>
</dbReference>
<dbReference type="InterPro" id="IPR004724">
    <property type="entry name" value="ENaC_chordates"/>
</dbReference>
<dbReference type="InterPro" id="IPR020903">
    <property type="entry name" value="ENaC_CS"/>
</dbReference>
<dbReference type="NCBIfam" id="TIGR00859">
    <property type="entry name" value="ENaC"/>
    <property type="match status" value="1"/>
</dbReference>
<dbReference type="PANTHER" id="PTHR11690:SF18">
    <property type="entry name" value="AMILORIDE-SENSITIVE SODIUM CHANNEL SUBUNIT BETA"/>
    <property type="match status" value="1"/>
</dbReference>
<dbReference type="PANTHER" id="PTHR11690">
    <property type="entry name" value="AMILORIDE-SENSITIVE SODIUM CHANNEL-RELATED"/>
    <property type="match status" value="1"/>
</dbReference>
<dbReference type="Pfam" id="PF00858">
    <property type="entry name" value="ASC"/>
    <property type="match status" value="1"/>
</dbReference>
<dbReference type="PRINTS" id="PR01078">
    <property type="entry name" value="AMINACHANNEL"/>
</dbReference>
<dbReference type="PROSITE" id="PS01206">
    <property type="entry name" value="ASC"/>
    <property type="match status" value="1"/>
</dbReference>
<organism>
    <name type="scientific">Oryctolagus cuniculus</name>
    <name type="common">Rabbit</name>
    <dbReference type="NCBI Taxonomy" id="9986"/>
    <lineage>
        <taxon>Eukaryota</taxon>
        <taxon>Metazoa</taxon>
        <taxon>Chordata</taxon>
        <taxon>Craniata</taxon>
        <taxon>Vertebrata</taxon>
        <taxon>Euteleostomi</taxon>
        <taxon>Mammalia</taxon>
        <taxon>Eutheria</taxon>
        <taxon>Euarchontoglires</taxon>
        <taxon>Glires</taxon>
        <taxon>Lagomorpha</taxon>
        <taxon>Leporidae</taxon>
        <taxon>Oryctolagus</taxon>
    </lineage>
</organism>
<comment type="function">
    <text evidence="3">This is one of the three pore-forming subunits of the heterotrimeric epithelial sodium channel (ENaC), a critical regulator of sodium balance and fluid homeostasis. ENaC operates in epithelial tissues, where it mediates the electrodiffusion of sodium ions from extracellular fluid through the apical membrane of cells, with water following osmotically. It plays a key role in maintaining sodium homeostasis through electrogenic sodium reabsorption in the kidneys. Additionally, ENaC is essential for airway surface liquid homeostasis, which is crucial for proper mucus clearance.</text>
</comment>
<comment type="catalytic activity">
    <reaction evidence="3">
        <text>Na(+)(in) = Na(+)(out)</text>
        <dbReference type="Rhea" id="RHEA:34963"/>
        <dbReference type="ChEBI" id="CHEBI:29101"/>
    </reaction>
</comment>
<comment type="activity regulation">
    <text evidence="3">Originally identified and characterized by its inhibition by the diuretic drug amiloride.</text>
</comment>
<comment type="subunit">
    <text evidence="3">Component of the heterotrimeric epithelial sodium channel (ENaC) composed of an alpha/SCNN1A, a beta/SCNN1B and a gamma/SCNN1G subunit. Interacts with WWP1 (via WW domains). Interacts with WWP2 (via WW domains); inhibits the channel. Interacts with the full-length immature form of PCSK9 (pro-PCSK9). Interacts (N-glycosylated) with BPIFA1; the interaction is direct and inhibits the proteolytic processing of SCNN1A and SCNN1G and the activation of ENaC.</text>
</comment>
<comment type="subcellular location">
    <subcellularLocation>
        <location evidence="3">Apical cell membrane</location>
        <topology evidence="3">Multi-pass membrane protein</topology>
    </subcellularLocation>
    <subcellularLocation>
        <location evidence="2">Cytoplasmic vesicle membrane</location>
        <topology evidence="3">Multi-pass membrane protein</topology>
    </subcellularLocation>
</comment>
<comment type="PTM">
    <text evidence="2 3">Ubiquitinated. Can be ubiquitinated at multiple sites and undergo monoubiquitination and polyubiquitination. Ubiquitination by NEDD4 or NEDD4L inhibits the ENaC channel through endocytosis, intracellular retention and degradation of its individual subunits (By similarity). However, some studies could not confirm the ubiquitination of this subunit of the ENaC (By similarity).</text>
</comment>
<comment type="PTM">
    <text evidence="2">Phosphorylated on serine and threonine residues. Aldosterone and insulin increase the basal level of phosphorylation.</text>
</comment>
<comment type="PTM">
    <text evidence="3">N-glycosylated. N-glycosylation is required for interaction with BPIFA1.</text>
</comment>
<comment type="similarity">
    <text evidence="7">Belongs to the amiloride-sensitive sodium channel (TC 1.A.6) family. SCNN1B subfamily.</text>
</comment>
<keyword id="KW-1003">Cell membrane</keyword>
<keyword id="KW-0968">Cytoplasmic vesicle</keyword>
<keyword id="KW-1015">Disulfide bond</keyword>
<keyword id="KW-0325">Glycoprotein</keyword>
<keyword id="KW-0407">Ion channel</keyword>
<keyword id="KW-0406">Ion transport</keyword>
<keyword id="KW-0472">Membrane</keyword>
<keyword id="KW-0597">Phosphoprotein</keyword>
<keyword id="KW-1185">Reference proteome</keyword>
<keyword id="KW-0915">Sodium</keyword>
<keyword id="KW-0894">Sodium channel</keyword>
<keyword id="KW-0739">Sodium transport</keyword>
<keyword id="KW-0812">Transmembrane</keyword>
<keyword id="KW-1133">Transmembrane helix</keyword>
<keyword id="KW-0813">Transport</keyword>
<keyword id="KW-0832">Ubl conjugation</keyword>
<reference key="1">
    <citation type="submission" date="1999-01" db="EMBL/GenBank/DDBJ databases">
        <title>The rabbit epithelial sodium channel.</title>
        <authorList>
            <person name="Kudlacek O."/>
            <person name="Weisz E."/>
            <person name="Wiener H."/>
            <person name="Plass H."/>
        </authorList>
    </citation>
    <scope>NUCLEOTIDE SEQUENCE [MRNA]</scope>
</reference>
<reference key="2">
    <citation type="submission" date="2000-01" db="EMBL/GenBank/DDBJ databases">
        <title>The rabbit DCT does not express amiloride sensitive sodium channel.</title>
        <authorList>
            <person name="Velazquez H."/>
            <person name="Silva T.C."/>
            <person name="Andujar E."/>
            <person name="Jaffer A."/>
            <person name="Ortiz D."/>
        </authorList>
    </citation>
    <scope>NUCLEOTIDE SEQUENCE [MRNA] OF 275-456</scope>
</reference>
<feature type="chain" id="PRO_0000181270" description="Epithelial sodium channel subunit beta">
    <location>
        <begin position="1"/>
        <end position="641"/>
    </location>
</feature>
<feature type="topological domain" description="Cytoplasmic" evidence="1">
    <location>
        <begin position="1"/>
        <end position="50"/>
    </location>
</feature>
<feature type="transmembrane region" description="Helical; Name=1" evidence="5">
    <location>
        <begin position="51"/>
        <end position="71"/>
    </location>
</feature>
<feature type="topological domain" description="Extracellular" evidence="1">
    <location>
        <begin position="72"/>
        <end position="533"/>
    </location>
</feature>
<feature type="transmembrane region" description="Helical; Name=2" evidence="5">
    <location>
        <begin position="534"/>
        <end position="554"/>
    </location>
</feature>
<feature type="topological domain" description="Cytoplasmic" evidence="1">
    <location>
        <begin position="555"/>
        <end position="641"/>
    </location>
</feature>
<feature type="region of interest" description="Disordered" evidence="6">
    <location>
        <begin position="596"/>
        <end position="641"/>
    </location>
</feature>
<feature type="short sequence motif" description="PY motif; recruits WW domain-containing proteins and is thereby required for ubiquitination and inhibition of the channel by NEDD4 and NEDD4L" evidence="3">
    <location>
        <begin position="617"/>
        <end position="621"/>
    </location>
</feature>
<feature type="compositionally biased region" description="Acidic residues" evidence="6">
    <location>
        <begin position="632"/>
        <end position="641"/>
    </location>
</feature>
<feature type="modified residue" description="Phosphoserine" evidence="4">
    <location>
        <position position="634"/>
    </location>
</feature>
<feature type="modified residue" description="Phosphoserine" evidence="4">
    <location>
        <position position="636"/>
    </location>
</feature>
<feature type="glycosylation site" description="N-linked (GlcNAc...) asparagine" evidence="5">
    <location>
        <position position="141"/>
    </location>
</feature>
<feature type="glycosylation site" description="N-linked (GlcNAc...) asparagine" evidence="5">
    <location>
        <position position="261"/>
    </location>
</feature>
<feature type="glycosylation site" description="N-linked (GlcNAc...) asparagine" evidence="5">
    <location>
        <position position="379"/>
    </location>
</feature>
<feature type="disulfide bond" evidence="3">
    <location>
        <begin position="98"/>
        <end position="273"/>
    </location>
</feature>
<feature type="disulfide bond" evidence="3">
    <location>
        <begin position="185"/>
        <end position="190"/>
    </location>
</feature>
<feature type="disulfide bond" evidence="3">
    <location>
        <begin position="197"/>
        <end position="204"/>
    </location>
</feature>
<feature type="disulfide bond" evidence="3">
    <location>
        <begin position="250"/>
        <end position="257"/>
    </location>
</feature>
<feature type="disulfide bond" evidence="3">
    <location>
        <begin position="362"/>
        <end position="449"/>
    </location>
</feature>
<feature type="disulfide bond" evidence="3">
    <location>
        <begin position="387"/>
        <end position="445"/>
    </location>
</feature>
<feature type="disulfide bond" evidence="3">
    <location>
        <begin position="391"/>
        <end position="441"/>
    </location>
</feature>
<feature type="disulfide bond" evidence="3">
    <location>
        <begin position="400"/>
        <end position="427"/>
    </location>
</feature>
<feature type="disulfide bond" evidence="3">
    <location>
        <begin position="402"/>
        <end position="416"/>
    </location>
</feature>
<feature type="sequence conflict" description="In Ref. 2; AAF43681." evidence="7" ref="2">
    <original>V</original>
    <variation>I</variation>
    <location>
        <position position="275"/>
    </location>
</feature>
<feature type="sequence conflict" description="In Ref. 2; AAF43681." evidence="7" ref="2">
    <original>H</original>
    <variation>R</variation>
    <location>
        <position position="389"/>
    </location>
</feature>
<feature type="sequence conflict" description="In Ref. 2; AAF43681." evidence="7" ref="2">
    <original>Y</original>
    <variation>H</variation>
    <location>
        <position position="415"/>
    </location>
</feature>
<proteinExistence type="evidence at transcript level"/>
<evidence type="ECO:0000250" key="1">
    <source>
        <dbReference type="UniProtKB" id="P37089"/>
    </source>
</evidence>
<evidence type="ECO:0000250" key="2">
    <source>
        <dbReference type="UniProtKB" id="P37090"/>
    </source>
</evidence>
<evidence type="ECO:0000250" key="3">
    <source>
        <dbReference type="UniProtKB" id="P51168"/>
    </source>
</evidence>
<evidence type="ECO:0000250" key="4">
    <source>
        <dbReference type="UniProtKB" id="Q9WU38"/>
    </source>
</evidence>
<evidence type="ECO:0000255" key="5"/>
<evidence type="ECO:0000256" key="6">
    <source>
        <dbReference type="SAM" id="MobiDB-lite"/>
    </source>
</evidence>
<evidence type="ECO:0000305" key="7"/>
<name>SCNNB_RABIT</name>
<sequence length="641" mass="71973">MHVKKYLLKCLHRLQKGPGYTYKELLVWYCDNTNTHGPKRIIREGPKKKAMWFLITLLFASLVCWQWGVFIKTYLSWEVSVSLSMGFKAMDFPAVTICNASPFRYSKVRHLLKDLDELMEAVLARILAPESSQANATAAMNLSMWNYTPLVLIDERDPHHPVVLDLFANDPTGSASSSPGPRGACNAQGCKVAMRLCSLNGTSCTFRNFSSATQAVTEWYALQATNIFSQVPQRELVELGYSAERLILACLFGAEPCSYRNFTSIFYPDYGNCYVFNWGMTEKALPSANPGTEFGLKLILDIGQEDYVPFLASTAGVRLMLHEQRSYPFIREEGVDAMSGTETSIGVLVDKLQRKGEPYSPCTVNGSDVPVQNLYGSYNTTYSIQACLHSCFQTQMIASCQCGHYLYPLPRGQEYCNSRDFPDWAPCYLALRMSEAERETCIRMCKESCNDTQYKMTISMADWPSEASEDWIFHVLSQERDQSTNVTLSRKGVVKLNIYFQEFNYRTIEESAANNIVWLLSNLGGQFGFWMGGSVLCLIEFAEIIIDFVWITIIKLVALAKGLRQRQAQARYAGPPPTVAELVEAHTNFGFQPDVGHRSPDAEAYPDEQALPIPGTPPPNYDSLRLQPLDVVESDSEGDAV</sequence>
<gene>
    <name evidence="3" type="primary">SCNN1B</name>
</gene>
<accession>O97742</accession>
<accession>Q9N132</accession>